<sequence length="828" mass="93650">MASTLPTTWPHESVKFEDVSLTFTEEEWAQLDFQQKCLYREIMMENYSNMISVEHHFSKPNVISQLEKAEDCWPMQREIPQDTLPECSWPSPDPGMNSFPSKSPLMKIEVVEVLTLNKDVAGPRNALIQSLYPEDLNPGNLKPAQQPSKRLTDTEASRQKFRHFQYEESAGPQKAMSQLRKLCHQWLQPNTRSKKQILELLVLEQFLNALPEKFRVWVESQHPEDCKAVVALLENMTSVSKDDASLACSSEATDQLKEKRKGVATLPVTFAAEVPAEEPVTFQDVAVDFNEEEWRLLGPTQKTEYHDVMLETLGNLVSVGWEPTLGNRELTPDSPIPVVKPIHDPNTNDLSRNGTQSTVFESILEDGVKEMHSIESNQVGNLQEKGHPQKKFSESSKSQDQTSRHKSQGSLNEVLPRKYVKVKQKGTGKRKGRTNTISMTRGLRIRKQQKDSVEWQGRSGSTPVTHGSSIKKQQQGSEQGKPGTSRDPITLTVPAKVYQKATGSEESIFMDSSDAMVPDVPPKIHQKGPEWHKVGESNNSMLQGSSVQNHQMESGAGRASDNSLLTHALPVKSHQKGYKEGNVQGNRNSWKHIKPHQKGSKGERVEELSTSEKHVPYVKNHLKTSERGKDREINASIKCDPYIKTYYRGSDVGRLRRANNCRKAFSLHAQQISFIKIHKGSQVCRCSECGKLFRNARYFSVHKKIHTGERPYMCMACGKAFVQSSSLTQHLRIHSGERPFECSECGRTFNDRSAISQHLRTHTGAKPYHCERCGKAFRQSSHLTRHERTHTGERPYVCIKCGKAFTQSSHLIGHQKTHGIKFKKQPKL</sequence>
<feature type="chain" id="PRO_0000406966" description="Neurotrophin receptor-interacting factor 1">
    <location>
        <begin position="1"/>
        <end position="828"/>
    </location>
</feature>
<feature type="domain" description="KRAB 1" evidence="2">
    <location>
        <begin position="14"/>
        <end position="85"/>
    </location>
</feature>
<feature type="domain" description="SCAN box" evidence="3">
    <location>
        <begin position="158"/>
        <end position="240"/>
    </location>
</feature>
<feature type="domain" description="KRAB 2" evidence="2">
    <location>
        <begin position="280"/>
        <end position="370"/>
    </location>
</feature>
<feature type="zinc finger region" description="C2H2-type 1" evidence="1">
    <location>
        <begin position="684"/>
        <end position="706"/>
    </location>
</feature>
<feature type="zinc finger region" description="C2H2-type 2" evidence="1">
    <location>
        <begin position="712"/>
        <end position="734"/>
    </location>
</feature>
<feature type="zinc finger region" description="C2H2-type 3" evidence="1">
    <location>
        <begin position="740"/>
        <end position="762"/>
    </location>
</feature>
<feature type="zinc finger region" description="C2H2-type 4" evidence="1">
    <location>
        <begin position="768"/>
        <end position="790"/>
    </location>
</feature>
<feature type="zinc finger region" description="C2H2-type 5" evidence="1">
    <location>
        <begin position="796"/>
        <end position="818"/>
    </location>
</feature>
<feature type="region of interest" description="Disordered" evidence="4">
    <location>
        <begin position="328"/>
        <end position="355"/>
    </location>
</feature>
<feature type="region of interest" description="Disordered" evidence="4">
    <location>
        <begin position="377"/>
        <end position="490"/>
    </location>
</feature>
<feature type="region of interest" description="Disordered" evidence="4">
    <location>
        <begin position="575"/>
        <end position="611"/>
    </location>
</feature>
<feature type="compositionally biased region" description="Polar residues" evidence="4">
    <location>
        <begin position="345"/>
        <end position="355"/>
    </location>
</feature>
<feature type="compositionally biased region" description="Basic and acidic residues" evidence="4">
    <location>
        <begin position="384"/>
        <end position="394"/>
    </location>
</feature>
<feature type="compositionally biased region" description="Basic residues" evidence="4">
    <location>
        <begin position="418"/>
        <end position="433"/>
    </location>
</feature>
<feature type="compositionally biased region" description="Polar residues" evidence="4">
    <location>
        <begin position="458"/>
        <end position="478"/>
    </location>
</feature>
<feature type="compositionally biased region" description="Basic residues" evidence="4">
    <location>
        <begin position="589"/>
        <end position="599"/>
    </location>
</feature>
<feature type="compositionally biased region" description="Basic and acidic residues" evidence="4">
    <location>
        <begin position="600"/>
        <end position="611"/>
    </location>
</feature>
<feature type="cross-link" description="Glycyl lysine isopeptide (Lys-Gly) (interchain with G-Cter in ubiquitin)" evidence="9 10">
    <location>
        <position position="15"/>
    </location>
</feature>
<feature type="mutagenesis site" description="Abolishes ubiquitination by TRAF6, binding to SQSTM1/p62, translocation to the nucleus and NGFR/p75(NTR)-mediated apoptosis." evidence="9">
    <original>K</original>
    <variation>R</variation>
    <location>
        <position position="15"/>
    </location>
</feature>
<feature type="sequence conflict" description="In Ref. 1; BAC30771." evidence="13" ref="1">
    <original>N</original>
    <variation>K</variation>
    <location>
        <position position="348"/>
    </location>
</feature>
<feature type="sequence conflict" description="In Ref. 1; BAC30771." evidence="13" ref="1">
    <original>S</original>
    <variation>T</variation>
    <location>
        <position position="373"/>
    </location>
</feature>
<feature type="sequence conflict" description="In Ref. 1; BAC30771." evidence="13" ref="1">
    <original>K</original>
    <variation>N</variation>
    <location>
        <position position="472"/>
    </location>
</feature>
<feature type="sequence conflict" description="In Ref. 1; BAC30771." evidence="13" ref="1">
    <original>E</original>
    <variation>K</variation>
    <location>
        <position position="505"/>
    </location>
</feature>
<feature type="sequence conflict" description="In Ref. 1; BAC30771." evidence="13" ref="1">
    <original>F</original>
    <variation>L</variation>
    <location>
        <position position="509"/>
    </location>
</feature>
<feature type="sequence conflict" description="In Ref. 1; BAC30771." evidence="13" ref="1">
    <original>P</original>
    <variation>S</variation>
    <location>
        <position position="518"/>
    </location>
</feature>
<gene>
    <name type="primary">Nrif1</name>
    <name type="synonym">Nrif</name>
    <name type="synonym">Zfp110</name>
</gene>
<reference key="1">
    <citation type="journal article" date="1999" name="EMBO J.">
        <title>The zinc finger protein NRIF interacts with the neurotrophin receptor p75(NTR) and participates in programmed cell death.</title>
        <authorList>
            <person name="Casademunt E."/>
            <person name="Carter B.D."/>
            <person name="Benzel I."/>
            <person name="Frade J.M."/>
            <person name="Dechant G."/>
            <person name="Barde Y.A."/>
        </authorList>
    </citation>
    <scope>NUCLEOTIDE SEQUENCE [MRNA]</scope>
    <scope>FUNCTION</scope>
    <scope>SUBCELLULAR LOCATION</scope>
    <scope>INTERACTION WITH NGFR</scope>
    <scope>DISRUPTION PHENOTYPE</scope>
    <source>
        <strain>129/Sv</strain>
    </source>
</reference>
<reference key="2">
    <citation type="journal article" date="2005" name="Science">
        <title>The transcriptional landscape of the mammalian genome.</title>
        <authorList>
            <person name="Carninci P."/>
            <person name="Kasukawa T."/>
            <person name="Katayama S."/>
            <person name="Gough J."/>
            <person name="Frith M.C."/>
            <person name="Maeda N."/>
            <person name="Oyama R."/>
            <person name="Ravasi T."/>
            <person name="Lenhard B."/>
            <person name="Wells C."/>
            <person name="Kodzius R."/>
            <person name="Shimokawa K."/>
            <person name="Bajic V.B."/>
            <person name="Brenner S.E."/>
            <person name="Batalov S."/>
            <person name="Forrest A.R."/>
            <person name="Zavolan M."/>
            <person name="Davis M.J."/>
            <person name="Wilming L.G."/>
            <person name="Aidinis V."/>
            <person name="Allen J.E."/>
            <person name="Ambesi-Impiombato A."/>
            <person name="Apweiler R."/>
            <person name="Aturaliya R.N."/>
            <person name="Bailey T.L."/>
            <person name="Bansal M."/>
            <person name="Baxter L."/>
            <person name="Beisel K.W."/>
            <person name="Bersano T."/>
            <person name="Bono H."/>
            <person name="Chalk A.M."/>
            <person name="Chiu K.P."/>
            <person name="Choudhary V."/>
            <person name="Christoffels A."/>
            <person name="Clutterbuck D.R."/>
            <person name="Crowe M.L."/>
            <person name="Dalla E."/>
            <person name="Dalrymple B.P."/>
            <person name="de Bono B."/>
            <person name="Della Gatta G."/>
            <person name="di Bernardo D."/>
            <person name="Down T."/>
            <person name="Engstrom P."/>
            <person name="Fagiolini M."/>
            <person name="Faulkner G."/>
            <person name="Fletcher C.F."/>
            <person name="Fukushima T."/>
            <person name="Furuno M."/>
            <person name="Futaki S."/>
            <person name="Gariboldi M."/>
            <person name="Georgii-Hemming P."/>
            <person name="Gingeras T.R."/>
            <person name="Gojobori T."/>
            <person name="Green R.E."/>
            <person name="Gustincich S."/>
            <person name="Harbers M."/>
            <person name="Hayashi Y."/>
            <person name="Hensch T.K."/>
            <person name="Hirokawa N."/>
            <person name="Hill D."/>
            <person name="Huminiecki L."/>
            <person name="Iacono M."/>
            <person name="Ikeo K."/>
            <person name="Iwama A."/>
            <person name="Ishikawa T."/>
            <person name="Jakt M."/>
            <person name="Kanapin A."/>
            <person name="Katoh M."/>
            <person name="Kawasawa Y."/>
            <person name="Kelso J."/>
            <person name="Kitamura H."/>
            <person name="Kitano H."/>
            <person name="Kollias G."/>
            <person name="Krishnan S.P."/>
            <person name="Kruger A."/>
            <person name="Kummerfeld S.K."/>
            <person name="Kurochkin I.V."/>
            <person name="Lareau L.F."/>
            <person name="Lazarevic D."/>
            <person name="Lipovich L."/>
            <person name="Liu J."/>
            <person name="Liuni S."/>
            <person name="McWilliam S."/>
            <person name="Madan Babu M."/>
            <person name="Madera M."/>
            <person name="Marchionni L."/>
            <person name="Matsuda H."/>
            <person name="Matsuzawa S."/>
            <person name="Miki H."/>
            <person name="Mignone F."/>
            <person name="Miyake S."/>
            <person name="Morris K."/>
            <person name="Mottagui-Tabar S."/>
            <person name="Mulder N."/>
            <person name="Nakano N."/>
            <person name="Nakauchi H."/>
            <person name="Ng P."/>
            <person name="Nilsson R."/>
            <person name="Nishiguchi S."/>
            <person name="Nishikawa S."/>
            <person name="Nori F."/>
            <person name="Ohara O."/>
            <person name="Okazaki Y."/>
            <person name="Orlando V."/>
            <person name="Pang K.C."/>
            <person name="Pavan W.J."/>
            <person name="Pavesi G."/>
            <person name="Pesole G."/>
            <person name="Petrovsky N."/>
            <person name="Piazza S."/>
            <person name="Reed J."/>
            <person name="Reid J.F."/>
            <person name="Ring B.Z."/>
            <person name="Ringwald M."/>
            <person name="Rost B."/>
            <person name="Ruan Y."/>
            <person name="Salzberg S.L."/>
            <person name="Sandelin A."/>
            <person name="Schneider C."/>
            <person name="Schoenbach C."/>
            <person name="Sekiguchi K."/>
            <person name="Semple C.A."/>
            <person name="Seno S."/>
            <person name="Sessa L."/>
            <person name="Sheng Y."/>
            <person name="Shibata Y."/>
            <person name="Shimada H."/>
            <person name="Shimada K."/>
            <person name="Silva D."/>
            <person name="Sinclair B."/>
            <person name="Sperling S."/>
            <person name="Stupka E."/>
            <person name="Sugiura K."/>
            <person name="Sultana R."/>
            <person name="Takenaka Y."/>
            <person name="Taki K."/>
            <person name="Tammoja K."/>
            <person name="Tan S.L."/>
            <person name="Tang S."/>
            <person name="Taylor M.S."/>
            <person name="Tegner J."/>
            <person name="Teichmann S.A."/>
            <person name="Ueda H.R."/>
            <person name="van Nimwegen E."/>
            <person name="Verardo R."/>
            <person name="Wei C.L."/>
            <person name="Yagi K."/>
            <person name="Yamanishi H."/>
            <person name="Zabarovsky E."/>
            <person name="Zhu S."/>
            <person name="Zimmer A."/>
            <person name="Hide W."/>
            <person name="Bult C."/>
            <person name="Grimmond S.M."/>
            <person name="Teasdale R.D."/>
            <person name="Liu E.T."/>
            <person name="Brusic V."/>
            <person name="Quackenbush J."/>
            <person name="Wahlestedt C."/>
            <person name="Mattick J.S."/>
            <person name="Hume D.A."/>
            <person name="Kai C."/>
            <person name="Sasaki D."/>
            <person name="Tomaru Y."/>
            <person name="Fukuda S."/>
            <person name="Kanamori-Katayama M."/>
            <person name="Suzuki M."/>
            <person name="Aoki J."/>
            <person name="Arakawa T."/>
            <person name="Iida J."/>
            <person name="Imamura K."/>
            <person name="Itoh M."/>
            <person name="Kato T."/>
            <person name="Kawaji H."/>
            <person name="Kawagashira N."/>
            <person name="Kawashima T."/>
            <person name="Kojima M."/>
            <person name="Kondo S."/>
            <person name="Konno H."/>
            <person name="Nakano K."/>
            <person name="Ninomiya N."/>
            <person name="Nishio T."/>
            <person name="Okada M."/>
            <person name="Plessy C."/>
            <person name="Shibata K."/>
            <person name="Shiraki T."/>
            <person name="Suzuki S."/>
            <person name="Tagami M."/>
            <person name="Waki K."/>
            <person name="Watahiki A."/>
            <person name="Okamura-Oho Y."/>
            <person name="Suzuki H."/>
            <person name="Kawai J."/>
            <person name="Hayashizaki Y."/>
        </authorList>
    </citation>
    <scope>NUCLEOTIDE SEQUENCE [LARGE SCALE MRNA]</scope>
    <source>
        <strain>C57BL/6J</strain>
        <tissue>Aorta</tissue>
        <tissue>Hippocampus</tissue>
        <tissue>Vein</tissue>
    </source>
</reference>
<reference key="3">
    <citation type="journal article" date="2004" name="Genome Res.">
        <title>The status, quality, and expansion of the NIH full-length cDNA project: the Mammalian Gene Collection (MGC).</title>
        <authorList>
            <consortium name="The MGC Project Team"/>
        </authorList>
    </citation>
    <scope>NUCLEOTIDE SEQUENCE [LARGE SCALE MRNA]</scope>
    <source>
        <strain>Czech II</strain>
        <tissue>Mammary tumor</tissue>
    </source>
</reference>
<reference key="4">
    <citation type="journal article" date="2001" name="Gene">
        <title>Strain-specific complementation between NRIF1 and NRIF2, two zinc finger proteins sharing structural and biochemical properties.</title>
        <authorList>
            <person name="Benzel I."/>
            <person name="Barde Y.A."/>
            <person name="Casademunt E."/>
        </authorList>
    </citation>
    <scope>DISRUPTION PHENOTYPE</scope>
</reference>
<reference key="5">
    <citation type="journal article" date="2004" name="J. Biol. Chem.">
        <title>A functional interaction between the p75 neurotrophin receptor interacting factors, TRAF6 and NRIF.</title>
        <authorList>
            <person name="Gentry J.J."/>
            <person name="Rutkoski N.J."/>
            <person name="Burke T.L."/>
            <person name="Carter B.D."/>
        </authorList>
    </citation>
    <scope>SUBCELLULAR LOCATION</scope>
    <scope>INTERACTION WITH TRAF6</scope>
</reference>
<reference key="6">
    <citation type="journal article" date="2005" name="EMBO J.">
        <title>TRAF6-mediated ubiquitination regulates nuclear translocation of NRIF, the p75 receptor interactor.</title>
        <authorList>
            <person name="Geetha T."/>
            <person name="Kenchappa R.S."/>
            <person name="Wooten M.W."/>
            <person name="Carter B.D."/>
        </authorList>
    </citation>
    <scope>UBIQUITINATION AT LYS-15</scope>
    <scope>SUBCELLULAR LOCATION</scope>
    <scope>INTERACTION WITH SQSTM1 AND TRAF6</scope>
    <scope>MUTAGENESIS OF LYS-15</scope>
</reference>
<reference key="7">
    <citation type="journal article" date="2005" name="J. Biol. Chem.">
        <title>Neurotrophin receptor interacting factor (NRIF) is an essential mediator of apoptotic signaling by the p75 neurotrophin receptor.</title>
        <authorList>
            <person name="Linggi M.S."/>
            <person name="Burke T.L."/>
            <person name="Williams B.B."/>
            <person name="Harrington A."/>
            <person name="Kraemer R."/>
            <person name="Hempstead B.L."/>
            <person name="Yoon S.O."/>
            <person name="Carter B.D."/>
        </authorList>
    </citation>
    <scope>FUNCTION</scope>
</reference>
<reference key="8">
    <citation type="journal article" date="2006" name="Neuron">
        <title>Ligand-dependent cleavage of the P75 neurotrophin receptor is necessary for NRIF nuclear translocation and apoptosis in sympathetic neurons.</title>
        <authorList>
            <person name="Kenchappa R.S."/>
            <person name="Zampieri N."/>
            <person name="Chao M.V."/>
            <person name="Barker P.A."/>
            <person name="Teng H.K."/>
            <person name="Hempstead B.L."/>
            <person name="Carter B.D."/>
        </authorList>
    </citation>
    <scope>FUNCTION</scope>
    <scope>UBIQUITINATION AT LYS-15</scope>
    <scope>SUBCELLULAR LOCATION</scope>
    <scope>INTERACTION WITH NGFR</scope>
</reference>
<reference key="9">
    <citation type="journal article" date="2008" name="J. Neurosci.">
        <title>Induction of proneurotrophins and activation of p75NTR-mediated apoptosis via neurotrophin receptor-interacting factor in hippocampal neurons after seizures.</title>
        <authorList>
            <person name="Volosin M."/>
            <person name="Trotter C."/>
            <person name="Cragnolini A."/>
            <person name="Kenchappa R.S."/>
            <person name="Light M."/>
            <person name="Hempstead B.L."/>
            <person name="Carter B.D."/>
            <person name="Friedman W.J."/>
        </authorList>
    </citation>
    <scope>FUNCTION</scope>
    <scope>SUBCELLULAR LOCATION</scope>
    <scope>INTERACTION WITH NGFR</scope>
</reference>
<reference key="10">
    <citation type="journal article" date="2009" name="J. Mol. Neurosci.">
        <title>NRIF is a regulator of neuronal cholesterol biosynthesis genes.</title>
        <authorList>
            <person name="Korade Z."/>
            <person name="Kenchappa R.S."/>
            <person name="Mirnics K."/>
            <person name="Carter B.D."/>
        </authorList>
    </citation>
    <scope>FUNCTION</scope>
</reference>
<keyword id="KW-0053">Apoptosis</keyword>
<keyword id="KW-0963">Cytoplasm</keyword>
<keyword id="KW-0238">DNA-binding</keyword>
<keyword id="KW-1017">Isopeptide bond</keyword>
<keyword id="KW-0479">Metal-binding</keyword>
<keyword id="KW-0539">Nucleus</keyword>
<keyword id="KW-1185">Reference proteome</keyword>
<keyword id="KW-0677">Repeat</keyword>
<keyword id="KW-0678">Repressor</keyword>
<keyword id="KW-0804">Transcription</keyword>
<keyword id="KW-0805">Transcription regulation</keyword>
<keyword id="KW-0832">Ubl conjugation</keyword>
<keyword id="KW-0862">Zinc</keyword>
<keyword id="KW-0863">Zinc-finger</keyword>
<accession>Q923B3</accession>
<accession>Q8BS00</accession>
<accession>Q9D6I6</accession>
<accession>Q9QZ07</accession>
<dbReference type="EMBL" id="AJ242914">
    <property type="protein sequence ID" value="CAB52296.1"/>
    <property type="molecule type" value="mRNA"/>
</dbReference>
<dbReference type="EMBL" id="AK013583">
    <property type="protein sequence ID" value="BAB28915.1"/>
    <property type="molecule type" value="mRNA"/>
</dbReference>
<dbReference type="EMBL" id="AK040989">
    <property type="protein sequence ID" value="BAC30771.1"/>
    <property type="status" value="ALT_INIT"/>
    <property type="molecule type" value="mRNA"/>
</dbReference>
<dbReference type="EMBL" id="BC006657">
    <property type="protein sequence ID" value="AAH06657.2"/>
    <property type="status" value="ALT_INIT"/>
    <property type="molecule type" value="mRNA"/>
</dbReference>
<dbReference type="RefSeq" id="NP_075357.4">
    <property type="nucleotide sequence ID" value="NM_022981.4"/>
</dbReference>
<dbReference type="RefSeq" id="XP_006540338.1">
    <property type="nucleotide sequence ID" value="XM_006540275.3"/>
</dbReference>
<dbReference type="SMR" id="Q923B3"/>
<dbReference type="BioGRID" id="211122">
    <property type="interactions" value="6"/>
</dbReference>
<dbReference type="FunCoup" id="Q923B3">
    <property type="interactions" value="1030"/>
</dbReference>
<dbReference type="IntAct" id="Q923B3">
    <property type="interactions" value="2"/>
</dbReference>
<dbReference type="STRING" id="10090.ENSMUSP00000004614"/>
<dbReference type="GlyGen" id="Q923B3">
    <property type="glycosylation" value="1 site, 1 O-linked glycan (1 site)"/>
</dbReference>
<dbReference type="iPTMnet" id="Q923B3"/>
<dbReference type="PhosphoSitePlus" id="Q923B3"/>
<dbReference type="PaxDb" id="10090-ENSMUSP00000004614"/>
<dbReference type="ProteomicsDB" id="293895"/>
<dbReference type="DNASU" id="65020"/>
<dbReference type="GeneID" id="65020"/>
<dbReference type="KEGG" id="mmu:65020"/>
<dbReference type="UCSC" id="uc009fej.2">
    <property type="organism name" value="mouse"/>
</dbReference>
<dbReference type="AGR" id="MGI:1890378"/>
<dbReference type="CTD" id="65020"/>
<dbReference type="MGI" id="MGI:1890378">
    <property type="gene designation" value="Zfp110"/>
</dbReference>
<dbReference type="eggNOG" id="KOG1721">
    <property type="taxonomic scope" value="Eukaryota"/>
</dbReference>
<dbReference type="InParanoid" id="Q923B3"/>
<dbReference type="OrthoDB" id="6077919at2759"/>
<dbReference type="PhylomeDB" id="Q923B3"/>
<dbReference type="TreeFam" id="TF338018"/>
<dbReference type="Reactome" id="R-MMU-212436">
    <property type="pathway name" value="Generic Transcription Pathway"/>
</dbReference>
<dbReference type="BioGRID-ORCS" id="65020">
    <property type="hits" value="2 hits in 78 CRISPR screens"/>
</dbReference>
<dbReference type="PRO" id="PR:Q923B3"/>
<dbReference type="Proteomes" id="UP000000589">
    <property type="component" value="Unplaced"/>
</dbReference>
<dbReference type="RNAct" id="Q923B3">
    <property type="molecule type" value="protein"/>
</dbReference>
<dbReference type="GO" id="GO:0005737">
    <property type="term" value="C:cytoplasm"/>
    <property type="evidence" value="ECO:0000314"/>
    <property type="project" value="UniProtKB"/>
</dbReference>
<dbReference type="GO" id="GO:0005829">
    <property type="term" value="C:cytosol"/>
    <property type="evidence" value="ECO:0000304"/>
    <property type="project" value="Reactome"/>
</dbReference>
<dbReference type="GO" id="GO:0005634">
    <property type="term" value="C:nucleus"/>
    <property type="evidence" value="ECO:0000314"/>
    <property type="project" value="UniProtKB"/>
</dbReference>
<dbReference type="GO" id="GO:0005166">
    <property type="term" value="F:neurotrophin p75 receptor binding"/>
    <property type="evidence" value="ECO:0000353"/>
    <property type="project" value="UniProtKB"/>
</dbReference>
<dbReference type="GO" id="GO:0043565">
    <property type="term" value="F:sequence-specific DNA binding"/>
    <property type="evidence" value="ECO:0000250"/>
    <property type="project" value="UniProtKB"/>
</dbReference>
<dbReference type="GO" id="GO:0008270">
    <property type="term" value="F:zinc ion binding"/>
    <property type="evidence" value="ECO:0007669"/>
    <property type="project" value="UniProtKB-KW"/>
</dbReference>
<dbReference type="GO" id="GO:0097191">
    <property type="term" value="P:extrinsic apoptotic signaling pathway"/>
    <property type="evidence" value="ECO:0000315"/>
    <property type="project" value="MGI"/>
</dbReference>
<dbReference type="GO" id="GO:0051402">
    <property type="term" value="P:neuron apoptotic process"/>
    <property type="evidence" value="ECO:0000315"/>
    <property type="project" value="UniProtKB"/>
</dbReference>
<dbReference type="GO" id="GO:0006355">
    <property type="term" value="P:regulation of DNA-templated transcription"/>
    <property type="evidence" value="ECO:0007669"/>
    <property type="project" value="InterPro"/>
</dbReference>
<dbReference type="GO" id="GO:0046328">
    <property type="term" value="P:regulation of JNK cascade"/>
    <property type="evidence" value="ECO:0000315"/>
    <property type="project" value="UniProtKB"/>
</dbReference>
<dbReference type="GO" id="GO:1990009">
    <property type="term" value="P:retinal cell apoptotic process"/>
    <property type="evidence" value="ECO:0000315"/>
    <property type="project" value="MGI"/>
</dbReference>
<dbReference type="CDD" id="cd07765">
    <property type="entry name" value="KRAB_A-box"/>
    <property type="match status" value="2"/>
</dbReference>
<dbReference type="CDD" id="cd07936">
    <property type="entry name" value="SCAN"/>
    <property type="match status" value="1"/>
</dbReference>
<dbReference type="FunFam" id="3.30.160.60:FF:000965">
    <property type="entry name" value="Neurotrophin receptor-interacting factor homolog"/>
    <property type="match status" value="1"/>
</dbReference>
<dbReference type="FunFam" id="3.30.160.60:FF:001712">
    <property type="entry name" value="Neurotrophin receptor-interacting factor homolog"/>
    <property type="match status" value="1"/>
</dbReference>
<dbReference type="FunFam" id="3.30.160.60:FF:001429">
    <property type="entry name" value="neurotrophin receptor-interacting factor homolog"/>
    <property type="match status" value="1"/>
</dbReference>
<dbReference type="FunFam" id="3.30.160.60:FF:001158">
    <property type="entry name" value="zinc finger protein 22"/>
    <property type="match status" value="1"/>
</dbReference>
<dbReference type="FunFam" id="1.10.4020.10:FF:000001">
    <property type="entry name" value="zinc finger protein 263 isoform X1"/>
    <property type="match status" value="1"/>
</dbReference>
<dbReference type="FunFam" id="3.30.160.60:FF:001498">
    <property type="entry name" value="Zinc finger protein 404"/>
    <property type="match status" value="1"/>
</dbReference>
<dbReference type="Gene3D" id="6.10.140.140">
    <property type="match status" value="2"/>
</dbReference>
<dbReference type="Gene3D" id="3.30.160.60">
    <property type="entry name" value="Classic Zinc Finger"/>
    <property type="match status" value="5"/>
</dbReference>
<dbReference type="Gene3D" id="1.10.4020.10">
    <property type="entry name" value="DNA breaking-rejoining enzymes"/>
    <property type="match status" value="1"/>
</dbReference>
<dbReference type="InterPro" id="IPR001909">
    <property type="entry name" value="KRAB"/>
</dbReference>
<dbReference type="InterPro" id="IPR036051">
    <property type="entry name" value="KRAB_dom_sf"/>
</dbReference>
<dbReference type="InterPro" id="IPR003309">
    <property type="entry name" value="SCAN_dom"/>
</dbReference>
<dbReference type="InterPro" id="IPR038269">
    <property type="entry name" value="SCAN_sf"/>
</dbReference>
<dbReference type="InterPro" id="IPR036236">
    <property type="entry name" value="Znf_C2H2_sf"/>
</dbReference>
<dbReference type="InterPro" id="IPR013087">
    <property type="entry name" value="Znf_C2H2_type"/>
</dbReference>
<dbReference type="PANTHER" id="PTHR24381">
    <property type="entry name" value="ZINC FINGER PROTEIN"/>
    <property type="match status" value="1"/>
</dbReference>
<dbReference type="PANTHER" id="PTHR24381:SF390">
    <property type="entry name" value="ZINC FINGER PROTEIN 37 HOMOLOG"/>
    <property type="match status" value="1"/>
</dbReference>
<dbReference type="Pfam" id="PF01352">
    <property type="entry name" value="KRAB"/>
    <property type="match status" value="2"/>
</dbReference>
<dbReference type="Pfam" id="PF02023">
    <property type="entry name" value="SCAN"/>
    <property type="match status" value="1"/>
</dbReference>
<dbReference type="Pfam" id="PF00096">
    <property type="entry name" value="zf-C2H2"/>
    <property type="match status" value="4"/>
</dbReference>
<dbReference type="SMART" id="SM00349">
    <property type="entry name" value="KRAB"/>
    <property type="match status" value="2"/>
</dbReference>
<dbReference type="SMART" id="SM00431">
    <property type="entry name" value="SCAN"/>
    <property type="match status" value="1"/>
</dbReference>
<dbReference type="SMART" id="SM00355">
    <property type="entry name" value="ZnF_C2H2"/>
    <property type="match status" value="5"/>
</dbReference>
<dbReference type="SUPFAM" id="SSF57667">
    <property type="entry name" value="beta-beta-alpha zinc fingers"/>
    <property type="match status" value="3"/>
</dbReference>
<dbReference type="SUPFAM" id="SSF109640">
    <property type="entry name" value="KRAB domain (Kruppel-associated box)"/>
    <property type="match status" value="2"/>
</dbReference>
<dbReference type="SUPFAM" id="SSF47353">
    <property type="entry name" value="Retrovirus capsid dimerization domain-like"/>
    <property type="match status" value="1"/>
</dbReference>
<dbReference type="PROSITE" id="PS50805">
    <property type="entry name" value="KRAB"/>
    <property type="match status" value="2"/>
</dbReference>
<dbReference type="PROSITE" id="PS50804">
    <property type="entry name" value="SCAN_BOX"/>
    <property type="match status" value="1"/>
</dbReference>
<dbReference type="PROSITE" id="PS00028">
    <property type="entry name" value="ZINC_FINGER_C2H2_1"/>
    <property type="match status" value="5"/>
</dbReference>
<dbReference type="PROSITE" id="PS50157">
    <property type="entry name" value="ZINC_FINGER_C2H2_2"/>
    <property type="match status" value="5"/>
</dbReference>
<evidence type="ECO:0000255" key="1">
    <source>
        <dbReference type="PROSITE-ProRule" id="PRU00042"/>
    </source>
</evidence>
<evidence type="ECO:0000255" key="2">
    <source>
        <dbReference type="PROSITE-ProRule" id="PRU00119"/>
    </source>
</evidence>
<evidence type="ECO:0000255" key="3">
    <source>
        <dbReference type="PROSITE-ProRule" id="PRU00187"/>
    </source>
</evidence>
<evidence type="ECO:0000256" key="4">
    <source>
        <dbReference type="SAM" id="MobiDB-lite"/>
    </source>
</evidence>
<evidence type="ECO:0000269" key="5">
    <source>
    </source>
</evidence>
<evidence type="ECO:0000269" key="6">
    <source>
    </source>
</evidence>
<evidence type="ECO:0000269" key="7">
    <source>
    </source>
</evidence>
<evidence type="ECO:0000269" key="8">
    <source>
    </source>
</evidence>
<evidence type="ECO:0000269" key="9">
    <source>
    </source>
</evidence>
<evidence type="ECO:0000269" key="10">
    <source>
    </source>
</evidence>
<evidence type="ECO:0000269" key="11">
    <source>
    </source>
</evidence>
<evidence type="ECO:0000269" key="12">
    <source>
    </source>
</evidence>
<evidence type="ECO:0000305" key="13"/>
<comment type="function">
    <text evidence="5 8 10 11 12">Transcription regulator involved in NGFR/p75(NTR)-mediated apoptosis. Essential component of the NGFR/p75(NTR) apoptotic pathway: upon ligand-binding and subsequent cleavage of NGFR/p75(NTR), binds to the intracellular domain (ICD) cleavage product of NGFR/p75(NTR), translocates to the nucleus and induces apoptosis, possibly by regulating expression of key regulators of apoptosis. Induces NGFR/p75(NTR)-mediated apoptosis in retina and sympathetic neurons. May also regulate expression of neuronal cholesterol biosynthesis genes. Probably acts as a transcription repressor: specifically binds to the 3'-end of zinc-finger coding genes and recruiting chromatin-modifying proteins such as SETDB1 and TRIM28/KAP1, leading to transcription repression.</text>
</comment>
<comment type="subunit">
    <text evidence="5 7 9 10 12">Interacts with NGFR/p75(NTR). Interacts (via KRAB 1 domain) with TRAF6. Interacts (when ubiquitinated at Lys-15) with SQSTM1/p62.</text>
</comment>
<comment type="subcellular location">
    <subcellularLocation>
        <location>Cytoplasm</location>
    </subcellularLocation>
    <subcellularLocation>
        <location>Nucleus</location>
    </subcellularLocation>
    <text>Translocates into the nucleus following binding to TRAF6 and subsequent ubiquitination at Lys-15.</text>
</comment>
<comment type="tissue specificity">
    <text>Ubiquitously expressed at low level. Expressed at higher level in testis.</text>
</comment>
<comment type="PTM">
    <text evidence="9 10">Ubiquitinated by TRAF6 at Lys-15 through 'Lys-63'-linked polyubiquitination. 'Lys-63'-linked polyubiquitination occurs in response to NGFR/p75(NTR) cleavage by gamma-secretase and promotes binding with the ICD cleavage product of NGFR/p75(NTR), followed by translocation into the nucleus and subsequent apoptosis.</text>
</comment>
<comment type="disruption phenotype">
    <text evidence="5 6">Lethal in a C57BL/6 background, while mice in a 129/Sv background are viable and healthy to adulthood. Mice in a C57BL/6 background do not survive beyond 12 dpc. Mice in a 129/Sv background may survive due to the presence of Nrif2/Zfp369, which is up-regulated in Nrif1 mutant mice in the 129/Sv background.</text>
</comment>
<comment type="similarity">
    <text evidence="13">Belongs to the krueppel C2H2-type zinc-finger protein family.</text>
</comment>
<comment type="sequence caution" evidence="13">
    <conflict type="erroneous initiation">
        <sequence resource="EMBL-CDS" id="AAH06657"/>
    </conflict>
    <text>Extended N-terminus.</text>
</comment>
<comment type="sequence caution" evidence="13">
    <conflict type="erroneous initiation">
        <sequence resource="EMBL-CDS" id="BAC30771"/>
    </conflict>
    <text>Extended N-terminus.</text>
</comment>
<protein>
    <recommendedName>
        <fullName>Neurotrophin receptor-interacting factor 1</fullName>
    </recommendedName>
    <alternativeName>
        <fullName>Neurotrophin receptor-interacting factor</fullName>
    </alternativeName>
    <alternativeName>
        <fullName>Zinc finger protein 110</fullName>
    </alternativeName>
</protein>
<name>NRIF1_MOUSE</name>
<proteinExistence type="evidence at protein level"/>
<organism>
    <name type="scientific">Mus musculus</name>
    <name type="common">Mouse</name>
    <dbReference type="NCBI Taxonomy" id="10090"/>
    <lineage>
        <taxon>Eukaryota</taxon>
        <taxon>Metazoa</taxon>
        <taxon>Chordata</taxon>
        <taxon>Craniata</taxon>
        <taxon>Vertebrata</taxon>
        <taxon>Euteleostomi</taxon>
        <taxon>Mammalia</taxon>
        <taxon>Eutheria</taxon>
        <taxon>Euarchontoglires</taxon>
        <taxon>Glires</taxon>
        <taxon>Rodentia</taxon>
        <taxon>Myomorpha</taxon>
        <taxon>Muroidea</taxon>
        <taxon>Muridae</taxon>
        <taxon>Murinae</taxon>
        <taxon>Mus</taxon>
        <taxon>Mus</taxon>
    </lineage>
</organism>